<evidence type="ECO:0000250" key="1"/>
<evidence type="ECO:0000250" key="2">
    <source>
        <dbReference type="UniProtKB" id="P11362"/>
    </source>
</evidence>
<evidence type="ECO:0000255" key="3"/>
<evidence type="ECO:0000255" key="4">
    <source>
        <dbReference type="PROSITE-ProRule" id="PRU00114"/>
    </source>
</evidence>
<evidence type="ECO:0000255" key="5">
    <source>
        <dbReference type="PROSITE-ProRule" id="PRU00159"/>
    </source>
</evidence>
<evidence type="ECO:0000255" key="6">
    <source>
        <dbReference type="PROSITE-ProRule" id="PRU10028"/>
    </source>
</evidence>
<evidence type="ECO:0000256" key="7">
    <source>
        <dbReference type="SAM" id="MobiDB-lite"/>
    </source>
</evidence>
<evidence type="ECO:0000269" key="8">
    <source>
    </source>
</evidence>
<evidence type="ECO:0000269" key="9">
    <source>
    </source>
</evidence>
<evidence type="ECO:0000269" key="10">
    <source>
    </source>
</evidence>
<evidence type="ECO:0000269" key="11">
    <source>
    </source>
</evidence>
<evidence type="ECO:0000269" key="12">
    <source>
    </source>
</evidence>
<evidence type="ECO:0000269" key="13">
    <source>
    </source>
</evidence>
<evidence type="ECO:0000269" key="14">
    <source>
    </source>
</evidence>
<evidence type="ECO:0000269" key="15">
    <source>
    </source>
</evidence>
<evidence type="ECO:0000269" key="16">
    <source>
    </source>
</evidence>
<evidence type="ECO:0000269" key="17">
    <source>
    </source>
</evidence>
<evidence type="ECO:0000269" key="18">
    <source>
    </source>
</evidence>
<evidence type="ECO:0000269" key="19">
    <source>
    </source>
</evidence>
<evidence type="ECO:0000303" key="20">
    <source>
    </source>
</evidence>
<evidence type="ECO:0000303" key="21">
    <source>
    </source>
</evidence>
<evidence type="ECO:0000303" key="22">
    <source>
    </source>
</evidence>
<evidence type="ECO:0000303" key="23">
    <source>
    </source>
</evidence>
<evidence type="ECO:0000303" key="24">
    <source>
    </source>
</evidence>
<evidence type="ECO:0000303" key="25">
    <source>
    </source>
</evidence>
<evidence type="ECO:0000303" key="26">
    <source>
    </source>
</evidence>
<evidence type="ECO:0000305" key="27"/>
<evidence type="ECO:0007829" key="28">
    <source>
        <dbReference type="PDB" id="2CKN"/>
    </source>
</evidence>
<comment type="function">
    <text evidence="2 8 9 11 13 17 18">Tyrosine-protein kinase that acts as a cell-surface receptor for fibroblast growth factors and plays an essential role in the regulation of embryonic development, cell proliferation, differentiation and migration. Required for normal mesoderm patterning and correct axial organization during embryonic development, normal skeletogenesis and normal development of the gonadotropin-releasing hormone (GnRH) neuronal system. Phosphorylates PLCG1, FRS2, GAB1 and SHB. Ligand binding leads to the activation of several signaling cascades. Activation of PLCG1 leads to the production of the cellular signaling molecules diacylglycerol and inositol 1,4,5-trisphosphate. Phosphorylation of FRS2 triggers recruitment of GRB2, GAB1, PIK3R1 and SOS1, and mediates activation of RAS, MAPK1/ERK2, MAPK3/ERK1 and the MAP kinase signaling pathway, as well as of the AKT1 signaling pathway. Promotes phosphorylation of SHC1, STAT1 and PTPN11/SHP2. In the nucleus, enhances RPS6KA1 and CREB1 activity and contributes to the regulation of transcription. FGFR1 signaling is down-regulated by IL17RD/SEF, and by FGFR1 ubiquitination, internalization and degradation (By similarity).</text>
</comment>
<comment type="catalytic activity">
    <reaction evidence="6">
        <text>L-tyrosyl-[protein] + ATP = O-phospho-L-tyrosyl-[protein] + ADP + H(+)</text>
        <dbReference type="Rhea" id="RHEA:10596"/>
        <dbReference type="Rhea" id="RHEA-COMP:10136"/>
        <dbReference type="Rhea" id="RHEA-COMP:20101"/>
        <dbReference type="ChEBI" id="CHEBI:15378"/>
        <dbReference type="ChEBI" id="CHEBI:30616"/>
        <dbReference type="ChEBI" id="CHEBI:46858"/>
        <dbReference type="ChEBI" id="CHEBI:61978"/>
        <dbReference type="ChEBI" id="CHEBI:456216"/>
        <dbReference type="EC" id="2.7.10.1"/>
    </reaction>
</comment>
<comment type="activity regulation">
    <text evidence="1">Present in an inactive conformation in the absence of bound ligand. Ligand binding leads to dimerization and activation by sequential autophosphorylation on tyrosine residues (By similarity).</text>
</comment>
<comment type="subunit">
    <text evidence="2 8 10 11 12 13 14 15 19">Monomer. Homodimer after ligand binding. Interacts predominantly with FGF1 and FGF2, but can also interact with FGF3, FGF4, FGF5, FGF6, FGF8, FGF10, FGF19, FGF21, FGF22 and FGF23 (in vitro) (PubMed:10821861, PubMed:1309590, PubMed:17086194). Ligand specificity is determined by tissue-specific expression of isoforms, and differences in the third Ig-like domain are crucial for ligand specificity. Affinity for fibroblast growth factors (FGFs) is increased by heparan sulfate glycosaminoglycans that function as coreceptors. Likewise, KLB increases the affinity for FGF19, FGF21 and FGF23. Interacts (phosphorylated on Tyr-766) with PLCG1 (via SH2 domains). Interacts with FRS2. Interacts with RPS6KA1. Interacts (via C-terminus) with NEDD4 (via WW3 domain). Interacts with KL (PubMed:17086194). Interacts with SHB (via SH2 domain) (PubMed:12181353). Interacts with GRB10 (By similarity). Interacts with ANOS1; this interaction does not interfere with FGF2-binding to FGFR1, but prevents binding of heparin-bound FGF2 (By similarity). Interacts with SOX2 and SOX3 (PubMed:17728342). Interacts with FLRT1, FLRT2 and FLRT3 (PubMed:16872596). Found in a ternary complex with FGF1 and ITGAV:ITGB3 (By similarity).</text>
</comment>
<comment type="interaction">
    <interactant intactId="EBI-7953898">
        <id>P16092</id>
    </interactant>
    <interactant intactId="EBI-1570828">
        <id>O35082</id>
        <label>Kl</label>
    </interactant>
    <organismsDiffer>false</organismsDiffer>
    <experiments>2</experiments>
</comment>
<comment type="interaction">
    <interactant intactId="EBI-7953898">
        <id>P16092</id>
    </interactant>
    <interactant intactId="EBI-15633521">
        <id>Q99N32</id>
        <label>Klb</label>
    </interactant>
    <organismsDiffer>false</organismsDiffer>
    <experiments>3</experiments>
</comment>
<comment type="interaction">
    <interactant intactId="EBI-7953898">
        <id>P16092</id>
    </interactant>
    <interactant intactId="EBI-916499">
        <id>P13596</id>
        <label>Ncam1</label>
    </interactant>
    <organismsDiffer>true</organismsDiffer>
    <experiments>2</experiments>
</comment>
<comment type="subcellular location">
    <subcellularLocation>
        <location>Cell membrane</location>
        <topology>Single-pass type I membrane protein</topology>
    </subcellularLocation>
    <subcellularLocation>
        <location>Nucleus</location>
    </subcellularLocation>
    <subcellularLocation>
        <location>Cytoplasm</location>
        <location>Cytosol</location>
    </subcellularLocation>
    <subcellularLocation>
        <location>Cytoplasmic vesicle</location>
    </subcellularLocation>
    <text>After ligand binding, both receptor and ligand are rapidly internalized. Can translocate to the nucleus after internalization, or by translocation from the endoplasmic reticulum or Golgi apparatus to the cytosol, and from there to the nucleus.</text>
</comment>
<comment type="subcellular location">
    <molecule>Isoform 1</molecule>
    <subcellularLocation>
        <location>Cell membrane</location>
        <topology>Single-pass type I membrane protein</topology>
    </subcellularLocation>
</comment>
<comment type="subcellular location">
    <molecule>Isoform 5</molecule>
    <subcellularLocation>
        <location>Cell membrane</location>
        <topology>Single-pass type I membrane protein</topology>
    </subcellularLocation>
</comment>
<comment type="alternative products">
    <event type="alternative splicing"/>
    <isoform>
        <id>P16092-1</id>
        <name>1</name>
        <name>FGFR1-IIIc</name>
        <name>Long</name>
        <sequence type="displayed"/>
    </isoform>
    <isoform>
        <id>P16092-2</id>
        <name>2</name>
        <name>Short</name>
        <sequence type="described" ref="VSP_002962"/>
    </isoform>
    <isoform>
        <id>P16092-3</id>
        <name>3</name>
        <name>Variant</name>
        <sequence type="described" ref="VSP_002961 VSP_002963"/>
    </isoform>
    <isoform>
        <id>P16092-4</id>
        <name>4</name>
        <sequence type="described" ref="VSP_002962 VSP_002963"/>
    </isoform>
    <isoform>
        <id>P16092-5</id>
        <name>5</name>
        <name>FGFR1-IIIb</name>
        <sequence type="described" ref="VSP_002962 VSP_002963 VSP_041919 VSP_041920 VSP_041921 VSP_041922"/>
    </isoform>
    <isoform>
        <id>P16092-6</id>
        <name>6</name>
        <sequence type="described" ref="VSP_002963"/>
    </isoform>
</comment>
<comment type="tissue specificity">
    <text evidence="8">Widely expressed.</text>
</comment>
<comment type="domain">
    <text evidence="1">The second and third Ig-like domains directly interact with fibroblast growth factors (FGF) and heparan sulfate proteoglycans. Isoforms lacking the first Ig-like domain have higher affinity for fibroblast growth factors (FGF) and heparan sulfate proteoglycans than isoforms with all three Ig-like domains (By similarity).</text>
</comment>
<comment type="PTM">
    <text evidence="2">Autophosphorylated. Binding of FGF family members together with heparan sulfate proteoglycan or heparin promotes receptor dimerization and autophosphorylation on tyrosine residues. Autophosphorylation occurs in trans between the two FGFR molecules present in the dimer and proceeds in a highly ordered manner. Initial autophosphorylation at Tyr-653 increases the kinase activity by a factor of 50 to 100. After this, Tyr-583 becomes phosphorylated, followed by phosphorylation of Tyr-463, Tyr-766, Tyr-583 and Tyr-585. In a third stage, Tyr-654 is autophosphorylated, resulting in a further tenfold increase of kinase activity. Phosphotyrosine residues provide docking sites for interacting proteins and so are crucial for FGFR1 function and its regulation (By similarity).</text>
</comment>
<comment type="PTM">
    <text evidence="2">Ubiquitinated. FGFR1 is rapidly ubiquitinated by NEDD4 after autophosphorylation, leading to internalization and lysosomal degradation. CBL is recruited to activated FGFR1 via FRS2 and GRB2, and mediates ubiquitination and subsequent degradation of FGFR1 (By similarity).</text>
</comment>
<comment type="PTM">
    <text evidence="8 16">N-glycosylated in the endoplasmic reticulum. The N-glycan chains undergo further maturation to an Endo H-resistant form in the Golgi apparatus.</text>
</comment>
<comment type="disruption phenotype">
    <text evidence="17 18">Embryonic lethality around gastrulation, due to growth defects during early embryonic development and aberrant mesoderm patterning.</text>
</comment>
<comment type="similarity">
    <text evidence="5">Belongs to the protein kinase superfamily. Tyr protein kinase family. Fibroblast growth factor receptor subfamily.</text>
</comment>
<comment type="sequence caution" evidence="27">
    <conflict type="miscellaneous discrepancy">
        <sequence resource="EMBL-CDS" id="AAB32845"/>
    </conflict>
    <text>Proposes two coding sequences for the same mRNA.</text>
</comment>
<name>FGFR1_MOUSE</name>
<reference key="1">
    <citation type="journal article" date="1990" name="Proc. Natl. Acad. Sci. U.S.A.">
        <title>Two forms of the basic fibroblast growth factor receptor-like mRNA are expressed in the developing mouse brain.</title>
        <authorList>
            <person name="Reid H.H."/>
            <person name="Wilks A.F."/>
            <person name="Bernard O."/>
        </authorList>
    </citation>
    <scope>NUCLEOTIDE SEQUENCE [MRNA] (ISOFORM 1)</scope>
    <source>
        <tissue>Brain</tissue>
    </source>
</reference>
<reference key="2">
    <citation type="journal article" date="1990" name="Oncogene">
        <title>The murine flg gene encodes a receptor for fibroblast growth factor.</title>
        <authorList>
            <person name="Safran A."/>
            <person name="Avivi A."/>
            <person name="Orr-Urtereger A."/>
            <person name="Neufeld G."/>
            <person name="Lonai P."/>
            <person name="Givol D."/>
            <person name="Yarden Y."/>
        </authorList>
    </citation>
    <scope>NUCLEOTIDE SEQUENCE [MRNA] (ISOFORM 6)</scope>
    <source>
        <strain>BALB/cJ</strain>
        <tissue>Brain</tissue>
    </source>
</reference>
<reference key="3">
    <citation type="journal article" date="1991" name="Biochem. Biophys. Res. Commun.">
        <title>Expression cDNA cloning of fibroblast growth factor (FGF) receptor in mouse breast cancer cells: a variant form in FGF-responsive transformed cells.</title>
        <authorList>
            <person name="Kouhara H."/>
            <person name="Kasayama S."/>
            <person name="Saito H."/>
            <person name="Matsumoto K."/>
            <person name="Sato B."/>
        </authorList>
    </citation>
    <scope>NUCLEOTIDE SEQUENCE [MRNA] (ISOFORM 3)</scope>
    <scope>ALTERNATIVE SPLICING</scope>
</reference>
<reference key="4">
    <citation type="journal article" date="1990" name="Proc. Natl. Acad. Sci. U.S.A.">
        <title>A murine fibroblast growth factor (FGF) receptor expressed in CHO cells is activated by basic FGF and Kaposi FGF.</title>
        <authorList>
            <person name="Mansukhani A."/>
            <person name="Moscatelli D."/>
            <person name="Talarico D."/>
            <person name="Levytska V."/>
            <person name="Basilico C."/>
        </authorList>
    </citation>
    <scope>NUCLEOTIDE SEQUENCE [MRNA] (ISOFORM 2)</scope>
</reference>
<reference key="5">
    <citation type="journal article" date="1994" name="J. Mol. Cell. Cardiol.">
        <title>Cloning and expression of fibroblast growth factor receptor-1 isoforms in the mouse heart: evidence for isoform switching during heart development.</title>
        <authorList>
            <person name="Jin Y."/>
            <person name="Pasumarthi K.B."/>
            <person name="Bock M.E."/>
            <person name="Lytras A."/>
            <person name="Kardami E."/>
            <person name="Cattini P.A."/>
        </authorList>
    </citation>
    <scope>NUCLEOTIDE SEQUENCE [MRNA] (ISOFORM 2)</scope>
    <scope>ALTERNATIVE SPLICING</scope>
    <source>
        <strain>Swiss Webster</strain>
        <tissue>Embryonic heart</tissue>
    </source>
</reference>
<reference key="6">
    <citation type="journal article" date="2000" name="J. Biol. Chem.">
        <title>Fibroblast growth factor (FGF) receptor 1-IIIb is a naturally occurring functional receptor for FGFs that is preferentially expressed in the skin and the brain.</title>
        <authorList>
            <person name="Beer H.-D."/>
            <person name="Vindevoghel L."/>
            <person name="Gait M.J."/>
            <person name="Revest J.-M."/>
            <person name="Duan D.R."/>
            <person name="Mason I."/>
            <person name="Dickson C."/>
            <person name="Werner S."/>
        </authorList>
    </citation>
    <scope>NUCLEOTIDE SEQUENCE [MRNA] (ISOFORM 5)</scope>
    <scope>SUBCELLULAR LOCATION</scope>
    <scope>FUNCTION AS FGF7 RECEPTOR AND IN ACTIVATION OF SIGNALING PATHWAYS</scope>
    <scope>INTERACTION WITH FGF1; FGF2; FGF7 AND FGF10</scope>
    <scope>GLYCOSYLATION</scope>
    <scope>TISSUE SPECIFICITY</scope>
    <scope>ALTERNATIVE SPLICING</scope>
    <source>
        <strain>BALB/cJ</strain>
    </source>
</reference>
<reference key="7">
    <citation type="journal article" date="2005" name="Science">
        <title>The transcriptional landscape of the mammalian genome.</title>
        <authorList>
            <person name="Carninci P."/>
            <person name="Kasukawa T."/>
            <person name="Katayama S."/>
            <person name="Gough J."/>
            <person name="Frith M.C."/>
            <person name="Maeda N."/>
            <person name="Oyama R."/>
            <person name="Ravasi T."/>
            <person name="Lenhard B."/>
            <person name="Wells C."/>
            <person name="Kodzius R."/>
            <person name="Shimokawa K."/>
            <person name="Bajic V.B."/>
            <person name="Brenner S.E."/>
            <person name="Batalov S."/>
            <person name="Forrest A.R."/>
            <person name="Zavolan M."/>
            <person name="Davis M.J."/>
            <person name="Wilming L.G."/>
            <person name="Aidinis V."/>
            <person name="Allen J.E."/>
            <person name="Ambesi-Impiombato A."/>
            <person name="Apweiler R."/>
            <person name="Aturaliya R.N."/>
            <person name="Bailey T.L."/>
            <person name="Bansal M."/>
            <person name="Baxter L."/>
            <person name="Beisel K.W."/>
            <person name="Bersano T."/>
            <person name="Bono H."/>
            <person name="Chalk A.M."/>
            <person name="Chiu K.P."/>
            <person name="Choudhary V."/>
            <person name="Christoffels A."/>
            <person name="Clutterbuck D.R."/>
            <person name="Crowe M.L."/>
            <person name="Dalla E."/>
            <person name="Dalrymple B.P."/>
            <person name="de Bono B."/>
            <person name="Della Gatta G."/>
            <person name="di Bernardo D."/>
            <person name="Down T."/>
            <person name="Engstrom P."/>
            <person name="Fagiolini M."/>
            <person name="Faulkner G."/>
            <person name="Fletcher C.F."/>
            <person name="Fukushima T."/>
            <person name="Furuno M."/>
            <person name="Futaki S."/>
            <person name="Gariboldi M."/>
            <person name="Georgii-Hemming P."/>
            <person name="Gingeras T.R."/>
            <person name="Gojobori T."/>
            <person name="Green R.E."/>
            <person name="Gustincich S."/>
            <person name="Harbers M."/>
            <person name="Hayashi Y."/>
            <person name="Hensch T.K."/>
            <person name="Hirokawa N."/>
            <person name="Hill D."/>
            <person name="Huminiecki L."/>
            <person name="Iacono M."/>
            <person name="Ikeo K."/>
            <person name="Iwama A."/>
            <person name="Ishikawa T."/>
            <person name="Jakt M."/>
            <person name="Kanapin A."/>
            <person name="Katoh M."/>
            <person name="Kawasawa Y."/>
            <person name="Kelso J."/>
            <person name="Kitamura H."/>
            <person name="Kitano H."/>
            <person name="Kollias G."/>
            <person name="Krishnan S.P."/>
            <person name="Kruger A."/>
            <person name="Kummerfeld S.K."/>
            <person name="Kurochkin I.V."/>
            <person name="Lareau L.F."/>
            <person name="Lazarevic D."/>
            <person name="Lipovich L."/>
            <person name="Liu J."/>
            <person name="Liuni S."/>
            <person name="McWilliam S."/>
            <person name="Madan Babu M."/>
            <person name="Madera M."/>
            <person name="Marchionni L."/>
            <person name="Matsuda H."/>
            <person name="Matsuzawa S."/>
            <person name="Miki H."/>
            <person name="Mignone F."/>
            <person name="Miyake S."/>
            <person name="Morris K."/>
            <person name="Mottagui-Tabar S."/>
            <person name="Mulder N."/>
            <person name="Nakano N."/>
            <person name="Nakauchi H."/>
            <person name="Ng P."/>
            <person name="Nilsson R."/>
            <person name="Nishiguchi S."/>
            <person name="Nishikawa S."/>
            <person name="Nori F."/>
            <person name="Ohara O."/>
            <person name="Okazaki Y."/>
            <person name="Orlando V."/>
            <person name="Pang K.C."/>
            <person name="Pavan W.J."/>
            <person name="Pavesi G."/>
            <person name="Pesole G."/>
            <person name="Petrovsky N."/>
            <person name="Piazza S."/>
            <person name="Reed J."/>
            <person name="Reid J.F."/>
            <person name="Ring B.Z."/>
            <person name="Ringwald M."/>
            <person name="Rost B."/>
            <person name="Ruan Y."/>
            <person name="Salzberg S.L."/>
            <person name="Sandelin A."/>
            <person name="Schneider C."/>
            <person name="Schoenbach C."/>
            <person name="Sekiguchi K."/>
            <person name="Semple C.A."/>
            <person name="Seno S."/>
            <person name="Sessa L."/>
            <person name="Sheng Y."/>
            <person name="Shibata Y."/>
            <person name="Shimada H."/>
            <person name="Shimada K."/>
            <person name="Silva D."/>
            <person name="Sinclair B."/>
            <person name="Sperling S."/>
            <person name="Stupka E."/>
            <person name="Sugiura K."/>
            <person name="Sultana R."/>
            <person name="Takenaka Y."/>
            <person name="Taki K."/>
            <person name="Tammoja K."/>
            <person name="Tan S.L."/>
            <person name="Tang S."/>
            <person name="Taylor M.S."/>
            <person name="Tegner J."/>
            <person name="Teichmann S.A."/>
            <person name="Ueda H.R."/>
            <person name="van Nimwegen E."/>
            <person name="Verardo R."/>
            <person name="Wei C.L."/>
            <person name="Yagi K."/>
            <person name="Yamanishi H."/>
            <person name="Zabarovsky E."/>
            <person name="Zhu S."/>
            <person name="Zimmer A."/>
            <person name="Hide W."/>
            <person name="Bult C."/>
            <person name="Grimmond S.M."/>
            <person name="Teasdale R.D."/>
            <person name="Liu E.T."/>
            <person name="Brusic V."/>
            <person name="Quackenbush J."/>
            <person name="Wahlestedt C."/>
            <person name="Mattick J.S."/>
            <person name="Hume D.A."/>
            <person name="Kai C."/>
            <person name="Sasaki D."/>
            <person name="Tomaru Y."/>
            <person name="Fukuda S."/>
            <person name="Kanamori-Katayama M."/>
            <person name="Suzuki M."/>
            <person name="Aoki J."/>
            <person name="Arakawa T."/>
            <person name="Iida J."/>
            <person name="Imamura K."/>
            <person name="Itoh M."/>
            <person name="Kato T."/>
            <person name="Kawaji H."/>
            <person name="Kawagashira N."/>
            <person name="Kawashima T."/>
            <person name="Kojima M."/>
            <person name="Kondo S."/>
            <person name="Konno H."/>
            <person name="Nakano K."/>
            <person name="Ninomiya N."/>
            <person name="Nishio T."/>
            <person name="Okada M."/>
            <person name="Plessy C."/>
            <person name="Shibata K."/>
            <person name="Shiraki T."/>
            <person name="Suzuki S."/>
            <person name="Tagami M."/>
            <person name="Waki K."/>
            <person name="Watahiki A."/>
            <person name="Okamura-Oho Y."/>
            <person name="Suzuki H."/>
            <person name="Kawai J."/>
            <person name="Hayashizaki Y."/>
        </authorList>
    </citation>
    <scope>NUCLEOTIDE SEQUENCE [LARGE SCALE MRNA] (ISOFORM 2)</scope>
    <source>
        <strain>C57BL/6J</strain>
        <tissue>Placenta</tissue>
    </source>
</reference>
<reference key="8">
    <citation type="journal article" date="2009" name="PLoS Biol.">
        <title>Lineage-specific biology revealed by a finished genome assembly of the mouse.</title>
        <authorList>
            <person name="Church D.M."/>
            <person name="Goodstadt L."/>
            <person name="Hillier L.W."/>
            <person name="Zody M.C."/>
            <person name="Goldstein S."/>
            <person name="She X."/>
            <person name="Bult C.J."/>
            <person name="Agarwala R."/>
            <person name="Cherry J.L."/>
            <person name="DiCuccio M."/>
            <person name="Hlavina W."/>
            <person name="Kapustin Y."/>
            <person name="Meric P."/>
            <person name="Maglott D."/>
            <person name="Birtle Z."/>
            <person name="Marques A.C."/>
            <person name="Graves T."/>
            <person name="Zhou S."/>
            <person name="Teague B."/>
            <person name="Potamousis K."/>
            <person name="Churas C."/>
            <person name="Place M."/>
            <person name="Herschleb J."/>
            <person name="Runnheim R."/>
            <person name="Forrest D."/>
            <person name="Amos-Landgraf J."/>
            <person name="Schwartz D.C."/>
            <person name="Cheng Z."/>
            <person name="Lindblad-Toh K."/>
            <person name="Eichler E.E."/>
            <person name="Ponting C.P."/>
        </authorList>
    </citation>
    <scope>NUCLEOTIDE SEQUENCE [LARGE SCALE GENOMIC DNA]</scope>
    <source>
        <strain>C57BL/6J</strain>
    </source>
</reference>
<reference key="9">
    <citation type="journal article" date="2004" name="Genome Res.">
        <title>The status, quality, and expansion of the NIH full-length cDNA project: the Mammalian Gene Collection (MGC).</title>
        <authorList>
            <consortium name="The MGC Project Team"/>
        </authorList>
    </citation>
    <scope>NUCLEOTIDE SEQUENCE [LARGE SCALE MRNA] (ISOFORM 4)</scope>
    <source>
        <strain>FVB/N</strain>
        <tissue>Mammary tumor</tissue>
    </source>
</reference>
<reference key="10">
    <citation type="journal article" date="1994" name="Biochem. Biophys. Res. Commun.">
        <title>Murine fibroblast growth factor receptor 1 gene generates multiple messenger RNAs containing two open reading frames via alternative splicing.</title>
        <authorList>
            <person name="Harada T."/>
            <person name="Saito H."/>
            <person name="Kouhara H."/>
            <person name="Kurebayashi S."/>
            <person name="Kasayama S."/>
            <person name="Terakawa N."/>
            <person name="Kishimoto T."/>
            <person name="Sato B."/>
        </authorList>
    </citation>
    <scope>NUCLEOTIDE SEQUENCE [MRNA] OF 1-15</scope>
    <scope>ALTERNATIVE SPLICING</scope>
</reference>
<reference key="11">
    <citation type="journal article" date="1992" name="Mol. Cell. Biol.">
        <title>Heparin is required for cell-free binding of basic fibroblast growth factor to a soluble receptor and for mitogenesis in whole cells.</title>
        <authorList>
            <person name="Ornitz D.M."/>
            <person name="Yayon A."/>
            <person name="Flanagan J.G."/>
            <person name="Svahn C.M."/>
            <person name="Levi E."/>
            <person name="Leder P."/>
        </authorList>
    </citation>
    <scope>INTERACTION WITH FGF1; FGF2; FGF4; FGF5; FGF6</scope>
    <scope>FUNCTION IN CELL PROLIFERATION</scope>
</reference>
<reference key="12">
    <citation type="journal article" date="1994" name="Genes Dev.">
        <title>fgfr-1 is required for embryonic growth and mesodermal patterning during mouse gastrulation.</title>
        <authorList>
            <person name="Yamaguchi T.P."/>
            <person name="Harpal K."/>
            <person name="Henkemeyer M."/>
            <person name="Rossant J."/>
        </authorList>
    </citation>
    <scope>DISRUPTION PHENOTYPE</scope>
    <scope>FUNCTION DURING EMBRYONIC DEVELOPMENT</scope>
</reference>
<reference key="13">
    <citation type="journal article" date="1994" name="Genes Dev.">
        <title>Murine FGFR-1 is required for early postimplantation growth and axial organization.</title>
        <authorList>
            <person name="Deng C.X."/>
            <person name="Wynshaw-Boris A."/>
            <person name="Shen M.M."/>
            <person name="Daugherty C."/>
            <person name="Ornitz D.M."/>
            <person name="Leder P."/>
        </authorList>
    </citation>
    <scope>DISRUPTION PHENOTYPE</scope>
    <scope>FUNCTION DURING EMBRYONIC DEVELOPMENT</scope>
</reference>
<reference key="14">
    <citation type="journal article" date="1996" name="J. Biol. Chem.">
        <title>Receptor specificity of the fibroblast growth factor family.</title>
        <authorList>
            <person name="Ornitz D.M."/>
            <person name="Xu J."/>
            <person name="Colvin J.S."/>
            <person name="McEwen D.G."/>
            <person name="MacArthur C.A."/>
            <person name="Coulier F."/>
            <person name="Gao G."/>
            <person name="Goldfarb M."/>
        </authorList>
    </citation>
    <scope>SUBUNIT</scope>
    <scope>LIGAND SPECIFICITY</scope>
</reference>
<reference key="15">
    <citation type="journal article" date="2000" name="J. Biol. Chem.">
        <title>Fibroblast growth factor (FGF)-2 directly stimulates mature osteoclast function through activation of FGF receptor 1 and p42/p44 MAP kinase.</title>
        <authorList>
            <person name="Chikazu D."/>
            <person name="Hakeda Y."/>
            <person name="Ogata N."/>
            <person name="Nemoto K."/>
            <person name="Itabashi A."/>
            <person name="Takato T."/>
            <person name="Kumegawa M."/>
            <person name="Nakamura K."/>
            <person name="Kawaguchi H."/>
        </authorList>
    </citation>
    <scope>FUNCTION</scope>
    <scope>SUBCELLULAR LOCATION</scope>
</reference>
<reference key="16">
    <citation type="journal article" date="2002" name="Mol. Biol. Cell">
        <title>The Shb adaptor protein binds to tyrosine 766 in the FGFR-1 and regulates the Ras/MEK/MAPK pathway via FRS2 phosphorylation in endothelial cells.</title>
        <authorList>
            <person name="Cross M.J."/>
            <person name="Lu L."/>
            <person name="Magnusson P."/>
            <person name="Nyqvist D."/>
            <person name="Holmqvist K."/>
            <person name="Welsh M."/>
            <person name="Claesson-Welsh L."/>
        </authorList>
    </citation>
    <scope>INTERACTION WITH SHB</scope>
</reference>
<reference key="17">
    <citation type="journal article" date="2004" name="DNA Cell Biol.">
        <title>Ligand dependent and independent internalization and nuclear translocation of fibroblast growth factor (FGF) receptor 1.</title>
        <authorList>
            <person name="Reilly J.F."/>
            <person name="Mizukoshi E."/>
            <person name="Maher P.A."/>
        </authorList>
    </citation>
    <scope>SUBCELLULAR LOCATION</scope>
</reference>
<reference key="18">
    <citation type="journal article" date="2006" name="Dev. Biol.">
        <title>Regulated expression of FLRT genes implies a functional role in the regulation of FGF signalling during mouse development.</title>
        <authorList>
            <person name="Haines B.P."/>
            <person name="Wheldon L.M."/>
            <person name="Summerbell D."/>
            <person name="Heath J.K."/>
            <person name="Rigby P.W.J."/>
        </authorList>
    </citation>
    <scope>INTERACTION WITH FLRT1; FLRT2 AND FLRT3</scope>
</reference>
<reference key="19">
    <citation type="journal article" date="2006" name="Nature">
        <title>Klotho converts canonical FGF receptor into a specific receptor for FGF23.</title>
        <authorList>
            <person name="Urakawa I."/>
            <person name="Yamazaki Y."/>
            <person name="Shimada T."/>
            <person name="Iijima K."/>
            <person name="Hasegawa H."/>
            <person name="Okawa K."/>
            <person name="Fujita T."/>
            <person name="Fukumoto S."/>
            <person name="Yamashita T."/>
        </authorList>
    </citation>
    <scope>FUNCTION</scope>
    <scope>INTERACTION WITH KL AND FGF23</scope>
</reference>
<reference key="20">
    <citation type="journal article" date="2007" name="Development">
        <title>SOX3 activity during pharyngeal segmentation is required for craniofacial morphogenesis.</title>
        <authorList>
            <person name="Rizzoti K."/>
            <person name="Lovell-Badge R."/>
        </authorList>
    </citation>
    <scope>INTERACTION WITH SOX2 AND SOX3</scope>
</reference>
<reference key="21">
    <citation type="journal article" date="2007" name="Proc. Natl. Acad. Sci. U.S.A.">
        <title>BetaKlotho is required for metabolic activity of fibroblast growth factor 21.</title>
        <authorList>
            <person name="Ogawa Y."/>
            <person name="Kurosu H."/>
            <person name="Yamamoto M."/>
            <person name="Nandi A."/>
            <person name="Rosenblatt K.P."/>
            <person name="Goetz R."/>
            <person name="Eliseenkova A.V."/>
            <person name="Mohammadi M."/>
            <person name="Kuro-o M."/>
        </authorList>
    </citation>
    <scope>INTERACTION WITH KLB</scope>
</reference>
<reference key="22">
    <citation type="journal article" date="2009" name="Nat. Biotechnol.">
        <title>Mass-spectrometric identification and relative quantification of N-linked cell surface glycoproteins.</title>
        <authorList>
            <person name="Wollscheid B."/>
            <person name="Bausch-Fluck D."/>
            <person name="Henderson C."/>
            <person name="O'Brien R."/>
            <person name="Bibel M."/>
            <person name="Schiess R."/>
            <person name="Aebersold R."/>
            <person name="Watts J.D."/>
        </authorList>
    </citation>
    <scope>GLYCOSYLATION [LARGE SCALE ANALYSIS] AT ASN-317</scope>
</reference>
<reference key="23">
    <citation type="journal article" date="2010" name="Cell">
        <title>A tissue-specific atlas of mouse protein phosphorylation and expression.</title>
        <authorList>
            <person name="Huttlin E.L."/>
            <person name="Jedrychowski M.P."/>
            <person name="Elias J.E."/>
            <person name="Goswami T."/>
            <person name="Rad R."/>
            <person name="Beausoleil S.A."/>
            <person name="Villen J."/>
            <person name="Haas W."/>
            <person name="Sowa M.E."/>
            <person name="Gygi S.P."/>
        </authorList>
    </citation>
    <scope>IDENTIFICATION BY MASS SPECTROMETRY [LARGE SCALE ANALYSIS]</scope>
    <source>
        <tissue>Brain</tissue>
    </source>
</reference>
<reference key="24">
    <citation type="journal article" date="2006" name="Protein Sci.">
        <title>NMR structure of the first Ig module of mouse FGFR1.</title>
        <authorList>
            <person name="Kiselyov V.V."/>
            <person name="Bock E."/>
            <person name="Berezin V."/>
            <person name="Poulsen F.M."/>
        </authorList>
    </citation>
    <scope>STRUCTURE BY NMR OF 25-119</scope>
</reference>
<gene>
    <name type="primary">Fgfr1</name>
    <name type="synonym">Flg</name>
</gene>
<dbReference type="EC" id="2.7.10.1" evidence="2"/>
<dbReference type="EMBL" id="M28998">
    <property type="protein sequence ID" value="AAA37290.1"/>
    <property type="molecule type" value="mRNA"/>
</dbReference>
<dbReference type="EMBL" id="X51893">
    <property type="protein sequence ID" value="CAA36175.1"/>
    <property type="molecule type" value="mRNA"/>
</dbReference>
<dbReference type="EMBL" id="M65053">
    <property type="protein sequence ID" value="AAA37620.1"/>
    <property type="molecule type" value="mRNA"/>
</dbReference>
<dbReference type="EMBL" id="M33760">
    <property type="protein sequence ID" value="AAA37622.1"/>
    <property type="molecule type" value="mRNA"/>
</dbReference>
<dbReference type="EMBL" id="U23445">
    <property type="protein sequence ID" value="AAC52183.1"/>
    <property type="molecule type" value="mRNA"/>
</dbReference>
<dbReference type="EMBL" id="AF176552">
    <property type="protein sequence ID" value="AAF05312.1"/>
    <property type="molecule type" value="mRNA"/>
</dbReference>
<dbReference type="EMBL" id="AK028354">
    <property type="protein sequence ID" value="BAC25899.1"/>
    <property type="molecule type" value="mRNA"/>
</dbReference>
<dbReference type="EMBL" id="S74765">
    <property type="protein sequence ID" value="AAB32845.1"/>
    <property type="status" value="ALT_SEQ"/>
    <property type="molecule type" value="mRNA"/>
</dbReference>
<dbReference type="EMBL" id="AC160526">
    <property type="status" value="NOT_ANNOTATED_CDS"/>
    <property type="molecule type" value="Genomic_DNA"/>
</dbReference>
<dbReference type="EMBL" id="BC033447">
    <property type="protein sequence ID" value="AAH33447.1"/>
    <property type="molecule type" value="mRNA"/>
</dbReference>
<dbReference type="CCDS" id="CCDS40304.1">
    <molecule id="P16092-2"/>
</dbReference>
<dbReference type="CCDS" id="CCDS52526.1">
    <molecule id="P16092-1"/>
</dbReference>
<dbReference type="CCDS" id="CCDS57614.1">
    <molecule id="P16092-6"/>
</dbReference>
<dbReference type="PIR" id="A34849">
    <property type="entry name" value="TVMSFG"/>
</dbReference>
<dbReference type="PIR" id="B42057">
    <property type="entry name" value="B42057"/>
</dbReference>
<dbReference type="PIR" id="I49293">
    <property type="entry name" value="I49293"/>
</dbReference>
<dbReference type="PIR" id="JH0393">
    <property type="entry name" value="JH0393"/>
</dbReference>
<dbReference type="RefSeq" id="NP_001073377.1">
    <molecule id="P16092-6"/>
    <property type="nucleotide sequence ID" value="NM_001079908.3"/>
</dbReference>
<dbReference type="RefSeq" id="NP_001073378.1">
    <molecule id="P16092-2"/>
    <property type="nucleotide sequence ID" value="NM_001079909.3"/>
</dbReference>
<dbReference type="RefSeq" id="NP_034336.2">
    <molecule id="P16092-1"/>
    <property type="nucleotide sequence ID" value="NM_010206.4"/>
</dbReference>
<dbReference type="RefSeq" id="XP_006509073.1">
    <property type="nucleotide sequence ID" value="XM_006509010.2"/>
</dbReference>
<dbReference type="RefSeq" id="XP_006509075.1">
    <property type="nucleotide sequence ID" value="XM_006509012.1"/>
</dbReference>
<dbReference type="RefSeq" id="XP_011240423.1">
    <property type="nucleotide sequence ID" value="XM_011242121.1"/>
</dbReference>
<dbReference type="PDB" id="2CKN">
    <property type="method" value="NMR"/>
    <property type="chains" value="A=25-119"/>
</dbReference>
<dbReference type="PDBsum" id="2CKN"/>
<dbReference type="BMRB" id="P16092"/>
<dbReference type="SMR" id="P16092"/>
<dbReference type="BioGRID" id="199656">
    <property type="interactions" value="43"/>
</dbReference>
<dbReference type="CORUM" id="P16092"/>
<dbReference type="DIP" id="DIP-6033N"/>
<dbReference type="FunCoup" id="P16092">
    <property type="interactions" value="2060"/>
</dbReference>
<dbReference type="IntAct" id="P16092">
    <property type="interactions" value="11"/>
</dbReference>
<dbReference type="MINT" id="P16092"/>
<dbReference type="STRING" id="10090.ENSMUSP00000081041"/>
<dbReference type="BindingDB" id="P16092"/>
<dbReference type="ChEMBL" id="CHEMBL3960"/>
<dbReference type="GlyConnect" id="2314">
    <property type="glycosylation" value="5 N-Linked glycans (2 sites)"/>
</dbReference>
<dbReference type="GlyCosmos" id="P16092">
    <property type="glycosylation" value="8 sites, 5 glycans"/>
</dbReference>
<dbReference type="GlyGen" id="P16092">
    <property type="glycosylation" value="10 sites, 8 N-linked glycans (5 sites), 1 O-linked glycan (1 site)"/>
</dbReference>
<dbReference type="iPTMnet" id="P16092"/>
<dbReference type="PhosphoSitePlus" id="P16092"/>
<dbReference type="CPTAC" id="non-CPTAC-4034"/>
<dbReference type="jPOST" id="P16092"/>
<dbReference type="PaxDb" id="10090-ENSMUSP00000081041"/>
<dbReference type="PeptideAtlas" id="P16092"/>
<dbReference type="ProteomicsDB" id="271577">
    <molecule id="P16092-1"/>
</dbReference>
<dbReference type="ProteomicsDB" id="271578">
    <molecule id="P16092-2"/>
</dbReference>
<dbReference type="ProteomicsDB" id="271579">
    <molecule id="P16092-3"/>
</dbReference>
<dbReference type="ProteomicsDB" id="271580">
    <molecule id="P16092-4"/>
</dbReference>
<dbReference type="ProteomicsDB" id="271581">
    <molecule id="P16092-5"/>
</dbReference>
<dbReference type="ProteomicsDB" id="271582">
    <molecule id="P16092-6"/>
</dbReference>
<dbReference type="Pumba" id="P16092"/>
<dbReference type="Antibodypedia" id="11015">
    <property type="antibodies" value="2561 antibodies from 48 providers"/>
</dbReference>
<dbReference type="DNASU" id="14182"/>
<dbReference type="Ensembl" id="ENSMUST00000084027.13">
    <molecule id="P16092-1"/>
    <property type="protein sequence ID" value="ENSMUSP00000081041.6"/>
    <property type="gene ID" value="ENSMUSG00000031565.20"/>
</dbReference>
<dbReference type="Ensembl" id="ENSMUST00000117179.9">
    <molecule id="P16092-6"/>
    <property type="protein sequence ID" value="ENSMUSP00000113909.3"/>
    <property type="gene ID" value="ENSMUSG00000031565.20"/>
</dbReference>
<dbReference type="Ensembl" id="ENSMUST00000119398.10">
    <molecule id="P16092-2"/>
    <property type="protein sequence ID" value="ENSMUSP00000113855.3"/>
    <property type="gene ID" value="ENSMUSG00000031565.20"/>
</dbReference>
<dbReference type="Ensembl" id="ENSMUST00000167764.2">
    <molecule id="P16092-5"/>
    <property type="protein sequence ID" value="ENSMUSP00000131343.2"/>
    <property type="gene ID" value="ENSMUSG00000031565.20"/>
</dbReference>
<dbReference type="GeneID" id="14182"/>
<dbReference type="KEGG" id="mmu:14182"/>
<dbReference type="UCSC" id="uc009lfy.2">
    <molecule id="P16092-1"/>
    <property type="organism name" value="mouse"/>
</dbReference>
<dbReference type="UCSC" id="uc009lga.2">
    <molecule id="P16092-2"/>
    <property type="organism name" value="mouse"/>
</dbReference>
<dbReference type="UCSC" id="uc033jet.1">
    <molecule id="P16092-4"/>
    <property type="organism name" value="mouse"/>
</dbReference>
<dbReference type="AGR" id="MGI:95522"/>
<dbReference type="CTD" id="2260"/>
<dbReference type="MGI" id="MGI:95522">
    <property type="gene designation" value="Fgfr1"/>
</dbReference>
<dbReference type="VEuPathDB" id="HostDB:ENSMUSG00000031565"/>
<dbReference type="eggNOG" id="KOG0200">
    <property type="taxonomic scope" value="Eukaryota"/>
</dbReference>
<dbReference type="GeneTree" id="ENSGT00940000155860"/>
<dbReference type="HOGENOM" id="CLU_000288_74_1_1"/>
<dbReference type="InParanoid" id="P16092"/>
<dbReference type="OrthoDB" id="18071at9989"/>
<dbReference type="PhylomeDB" id="P16092"/>
<dbReference type="TreeFam" id="TF316307"/>
<dbReference type="BRENDA" id="2.7.10.1">
    <property type="organism ID" value="3474"/>
</dbReference>
<dbReference type="Reactome" id="R-MMU-109704">
    <property type="pathway name" value="PI3K Cascade"/>
</dbReference>
<dbReference type="Reactome" id="R-MMU-1257604">
    <property type="pathway name" value="PIP3 activates AKT signaling"/>
</dbReference>
<dbReference type="Reactome" id="R-MMU-190370">
    <property type="pathway name" value="FGFR1b ligand binding and activation"/>
</dbReference>
<dbReference type="Reactome" id="R-MMU-190373">
    <property type="pathway name" value="FGFR1c ligand binding and activation"/>
</dbReference>
<dbReference type="Reactome" id="R-MMU-190374">
    <property type="pathway name" value="FGFR1c and Klotho ligand binding and activation"/>
</dbReference>
<dbReference type="Reactome" id="R-MMU-445144">
    <property type="pathway name" value="Signal transduction by L1"/>
</dbReference>
<dbReference type="Reactome" id="R-MMU-5654219">
    <property type="pathway name" value="Phospholipase C-mediated cascade: FGFR1"/>
</dbReference>
<dbReference type="Reactome" id="R-MMU-5654687">
    <property type="pathway name" value="Downstream signaling of activated FGFR1"/>
</dbReference>
<dbReference type="Reactome" id="R-MMU-5654688">
    <property type="pathway name" value="SHC-mediated cascade:FGFR1"/>
</dbReference>
<dbReference type="Reactome" id="R-MMU-5654689">
    <property type="pathway name" value="PI-3K cascade:FGFR1"/>
</dbReference>
<dbReference type="Reactome" id="R-MMU-5654693">
    <property type="pathway name" value="FRS-mediated FGFR1 signaling"/>
</dbReference>
<dbReference type="Reactome" id="R-MMU-5654726">
    <property type="pathway name" value="Negative regulation of FGFR1 signaling"/>
</dbReference>
<dbReference type="Reactome" id="R-MMU-5673001">
    <property type="pathway name" value="RAF/MAP kinase cascade"/>
</dbReference>
<dbReference type="Reactome" id="R-MMU-6811558">
    <property type="pathway name" value="PI5P, PP2A and IER3 Regulate PI3K/AKT Signaling"/>
</dbReference>
<dbReference type="BioGRID-ORCS" id="14182">
    <property type="hits" value="6 hits in 79 CRISPR screens"/>
</dbReference>
<dbReference type="ChiTaRS" id="Fgfr1">
    <property type="organism name" value="mouse"/>
</dbReference>
<dbReference type="EvolutionaryTrace" id="P16092"/>
<dbReference type="PRO" id="PR:P16092"/>
<dbReference type="Proteomes" id="UP000000589">
    <property type="component" value="Chromosome 8"/>
</dbReference>
<dbReference type="RNAct" id="P16092">
    <property type="molecule type" value="protein"/>
</dbReference>
<dbReference type="Bgee" id="ENSMUSG00000031565">
    <property type="expression patterns" value="Expressed in molar tooth and 338 other cell types or tissues"/>
</dbReference>
<dbReference type="ExpressionAtlas" id="P16092">
    <property type="expression patterns" value="baseline and differential"/>
</dbReference>
<dbReference type="GO" id="GO:0031410">
    <property type="term" value="C:cytoplasmic vesicle"/>
    <property type="evidence" value="ECO:0007669"/>
    <property type="project" value="UniProtKB-KW"/>
</dbReference>
<dbReference type="GO" id="GO:0005829">
    <property type="term" value="C:cytosol"/>
    <property type="evidence" value="ECO:0007669"/>
    <property type="project" value="UniProtKB-SubCell"/>
</dbReference>
<dbReference type="GO" id="GO:0098978">
    <property type="term" value="C:glutamatergic synapse"/>
    <property type="evidence" value="ECO:0000314"/>
    <property type="project" value="SynGO"/>
</dbReference>
<dbReference type="GO" id="GO:0005634">
    <property type="term" value="C:nucleus"/>
    <property type="evidence" value="ECO:0007669"/>
    <property type="project" value="UniProtKB-SubCell"/>
</dbReference>
<dbReference type="GO" id="GO:0005886">
    <property type="term" value="C:plasma membrane"/>
    <property type="evidence" value="ECO:0000353"/>
    <property type="project" value="MGI"/>
</dbReference>
<dbReference type="GO" id="GO:0098794">
    <property type="term" value="C:postsynapse"/>
    <property type="evidence" value="ECO:0000314"/>
    <property type="project" value="SynGO"/>
</dbReference>
<dbReference type="GO" id="GO:0043235">
    <property type="term" value="C:receptor complex"/>
    <property type="evidence" value="ECO:0000266"/>
    <property type="project" value="MGI"/>
</dbReference>
<dbReference type="GO" id="GO:0005524">
    <property type="term" value="F:ATP binding"/>
    <property type="evidence" value="ECO:0007669"/>
    <property type="project" value="UniProtKB-KW"/>
</dbReference>
<dbReference type="GO" id="GO:0017134">
    <property type="term" value="F:fibroblast growth factor binding"/>
    <property type="evidence" value="ECO:0000314"/>
    <property type="project" value="MGI"/>
</dbReference>
<dbReference type="GO" id="GO:0005007">
    <property type="term" value="F:fibroblast growth factor receptor activity"/>
    <property type="evidence" value="ECO:0000314"/>
    <property type="project" value="MGI"/>
</dbReference>
<dbReference type="GO" id="GO:0008201">
    <property type="term" value="F:heparin binding"/>
    <property type="evidence" value="ECO:0000250"/>
    <property type="project" value="UniProtKB"/>
</dbReference>
<dbReference type="GO" id="GO:0042803">
    <property type="term" value="F:protein homodimerization activity"/>
    <property type="evidence" value="ECO:0007669"/>
    <property type="project" value="Ensembl"/>
</dbReference>
<dbReference type="GO" id="GO:0090722">
    <property type="term" value="F:receptor-receptor interaction"/>
    <property type="evidence" value="ECO:0007669"/>
    <property type="project" value="Ensembl"/>
</dbReference>
<dbReference type="GO" id="GO:0042169">
    <property type="term" value="F:SH2 domain binding"/>
    <property type="evidence" value="ECO:0000353"/>
    <property type="project" value="MGI"/>
</dbReference>
<dbReference type="GO" id="GO:0001525">
    <property type="term" value="P:angiogenesis"/>
    <property type="evidence" value="ECO:0000316"/>
    <property type="project" value="MGI"/>
</dbReference>
<dbReference type="GO" id="GO:0060117">
    <property type="term" value="P:auditory receptor cell development"/>
    <property type="evidence" value="ECO:0000315"/>
    <property type="project" value="MGI"/>
</dbReference>
<dbReference type="GO" id="GO:0048514">
    <property type="term" value="P:blood vessel morphogenesis"/>
    <property type="evidence" value="ECO:0000315"/>
    <property type="project" value="MGI"/>
</dbReference>
<dbReference type="GO" id="GO:0007420">
    <property type="term" value="P:brain development"/>
    <property type="evidence" value="ECO:0000315"/>
    <property type="project" value="MGI"/>
</dbReference>
<dbReference type="GO" id="GO:0060445">
    <property type="term" value="P:branching involved in salivary gland morphogenesis"/>
    <property type="evidence" value="ECO:0000315"/>
    <property type="project" value="MGI"/>
</dbReference>
<dbReference type="GO" id="GO:0055074">
    <property type="term" value="P:calcium ion homeostasis"/>
    <property type="evidence" value="ECO:0000316"/>
    <property type="project" value="MGI"/>
</dbReference>
<dbReference type="GO" id="GO:0060038">
    <property type="term" value="P:cardiac muscle cell proliferation"/>
    <property type="evidence" value="ECO:0000316"/>
    <property type="project" value="MGI"/>
</dbReference>
<dbReference type="GO" id="GO:0048469">
    <property type="term" value="P:cell maturation"/>
    <property type="evidence" value="ECO:0000315"/>
    <property type="project" value="MGI"/>
</dbReference>
<dbReference type="GO" id="GO:0008283">
    <property type="term" value="P:cell population proliferation"/>
    <property type="evidence" value="ECO:0000316"/>
    <property type="project" value="MGI"/>
</dbReference>
<dbReference type="GO" id="GO:0030031">
    <property type="term" value="P:cell projection assembly"/>
    <property type="evidence" value="ECO:0000314"/>
    <property type="project" value="MGI"/>
</dbReference>
<dbReference type="GO" id="GO:0071529">
    <property type="term" value="P:cementum mineralization"/>
    <property type="evidence" value="ECO:0000314"/>
    <property type="project" value="MGI"/>
</dbReference>
<dbReference type="GO" id="GO:0002062">
    <property type="term" value="P:chondrocyte differentiation"/>
    <property type="evidence" value="ECO:0000316"/>
    <property type="project" value="MGI"/>
</dbReference>
<dbReference type="GO" id="GO:0071344">
    <property type="term" value="P:diphosphate metabolic process"/>
    <property type="evidence" value="ECO:0000314"/>
    <property type="project" value="MGI"/>
</dbReference>
<dbReference type="GO" id="GO:0043583">
    <property type="term" value="P:ear development"/>
    <property type="evidence" value="ECO:0000315"/>
    <property type="project" value="MGI"/>
</dbReference>
<dbReference type="GO" id="GO:0030326">
    <property type="term" value="P:embryonic limb morphogenesis"/>
    <property type="evidence" value="ECO:0000315"/>
    <property type="project" value="MGI"/>
</dbReference>
<dbReference type="GO" id="GO:0001837">
    <property type="term" value="P:epithelial to mesenchymal transition"/>
    <property type="evidence" value="ECO:0007669"/>
    <property type="project" value="Ensembl"/>
</dbReference>
<dbReference type="GO" id="GO:0008543">
    <property type="term" value="P:fibroblast growth factor receptor signaling pathway"/>
    <property type="evidence" value="ECO:0000316"/>
    <property type="project" value="MGI"/>
</dbReference>
<dbReference type="GO" id="GO:0035607">
    <property type="term" value="P:fibroblast growth factor receptor signaling pathway involved in orbitofrontal cortex development"/>
    <property type="evidence" value="ECO:0000315"/>
    <property type="project" value="UniProtKB"/>
</dbReference>
<dbReference type="GO" id="GO:0010467">
    <property type="term" value="P:gene expression"/>
    <property type="evidence" value="ECO:0000314"/>
    <property type="project" value="MGI"/>
</dbReference>
<dbReference type="GO" id="GO:0048699">
    <property type="term" value="P:generation of neurons"/>
    <property type="evidence" value="ECO:0000315"/>
    <property type="project" value="MGI"/>
</dbReference>
<dbReference type="GO" id="GO:0001701">
    <property type="term" value="P:in utero embryonic development"/>
    <property type="evidence" value="ECO:0000316"/>
    <property type="project" value="MGI"/>
</dbReference>
<dbReference type="GO" id="GO:0042472">
    <property type="term" value="P:inner ear morphogenesis"/>
    <property type="evidence" value="ECO:0000315"/>
    <property type="project" value="MGI"/>
</dbReference>
<dbReference type="GO" id="GO:0030324">
    <property type="term" value="P:lung development"/>
    <property type="evidence" value="ECO:0000315"/>
    <property type="project" value="MGI"/>
</dbReference>
<dbReference type="GO" id="GO:0060484">
    <property type="term" value="P:lung-associated mesenchyme development"/>
    <property type="evidence" value="ECO:0000316"/>
    <property type="project" value="MGI"/>
</dbReference>
<dbReference type="GO" id="GO:0048762">
    <property type="term" value="P:mesenchymal cell differentiation"/>
    <property type="evidence" value="ECO:0000316"/>
    <property type="project" value="MGI"/>
</dbReference>
<dbReference type="GO" id="GO:0010463">
    <property type="term" value="P:mesenchymal cell proliferation"/>
    <property type="evidence" value="ECO:0000315"/>
    <property type="project" value="MGI"/>
</dbReference>
<dbReference type="GO" id="GO:0030901">
    <property type="term" value="P:midbrain development"/>
    <property type="evidence" value="ECO:0000315"/>
    <property type="project" value="MGI"/>
</dbReference>
<dbReference type="GO" id="GO:0042474">
    <property type="term" value="P:middle ear morphogenesis"/>
    <property type="evidence" value="ECO:0000315"/>
    <property type="project" value="MGI"/>
</dbReference>
<dbReference type="GO" id="GO:0090272">
    <property type="term" value="P:negative regulation of fibroblast growth factor production"/>
    <property type="evidence" value="ECO:0000316"/>
    <property type="project" value="MGI"/>
</dbReference>
<dbReference type="GO" id="GO:0010629">
    <property type="term" value="P:negative regulation of gene expression"/>
    <property type="evidence" value="ECO:0000315"/>
    <property type="project" value="MGI"/>
</dbReference>
<dbReference type="GO" id="GO:0000122">
    <property type="term" value="P:negative regulation of transcription by RNA polymerase II"/>
    <property type="evidence" value="ECO:0000315"/>
    <property type="project" value="UniProtKB"/>
</dbReference>
<dbReference type="GO" id="GO:0031175">
    <property type="term" value="P:neuron projection development"/>
    <property type="evidence" value="ECO:0000316"/>
    <property type="project" value="MGI"/>
</dbReference>
<dbReference type="GO" id="GO:0021769">
    <property type="term" value="P:orbitofrontal cortex development"/>
    <property type="evidence" value="ECO:0000315"/>
    <property type="project" value="UniProtKB"/>
</dbReference>
<dbReference type="GO" id="GO:0001759">
    <property type="term" value="P:organ induction"/>
    <property type="evidence" value="ECO:0000315"/>
    <property type="project" value="MGI"/>
</dbReference>
<dbReference type="GO" id="GO:0042473">
    <property type="term" value="P:outer ear morphogenesis"/>
    <property type="evidence" value="ECO:0000315"/>
    <property type="project" value="MGI"/>
</dbReference>
<dbReference type="GO" id="GO:0048339">
    <property type="term" value="P:paraxial mesoderm development"/>
    <property type="evidence" value="ECO:0000316"/>
    <property type="project" value="MGI"/>
</dbReference>
<dbReference type="GO" id="GO:0043536">
    <property type="term" value="P:positive regulation of blood vessel endothelial cell migration"/>
    <property type="evidence" value="ECO:0007669"/>
    <property type="project" value="Ensembl"/>
</dbReference>
<dbReference type="GO" id="GO:0060045">
    <property type="term" value="P:positive regulation of cardiac muscle cell proliferation"/>
    <property type="evidence" value="ECO:0000316"/>
    <property type="project" value="MGI"/>
</dbReference>
<dbReference type="GO" id="GO:0045787">
    <property type="term" value="P:positive regulation of cell cycle"/>
    <property type="evidence" value="ECO:0000315"/>
    <property type="project" value="UniProtKB"/>
</dbReference>
<dbReference type="GO" id="GO:0008284">
    <property type="term" value="P:positive regulation of cell population proliferation"/>
    <property type="evidence" value="ECO:0000314"/>
    <property type="project" value="MGI"/>
</dbReference>
<dbReference type="GO" id="GO:2001028">
    <property type="term" value="P:positive regulation of endothelial cell chemotaxis"/>
    <property type="evidence" value="ECO:0007669"/>
    <property type="project" value="Ensembl"/>
</dbReference>
<dbReference type="GO" id="GO:0090080">
    <property type="term" value="P:positive regulation of MAPKKK cascade by fibroblast growth factor receptor signaling pathway"/>
    <property type="evidence" value="ECO:0000316"/>
    <property type="project" value="MGI"/>
</dbReference>
<dbReference type="GO" id="GO:0002053">
    <property type="term" value="P:positive regulation of mesenchymal cell proliferation"/>
    <property type="evidence" value="ECO:0000315"/>
    <property type="project" value="MGI"/>
</dbReference>
<dbReference type="GO" id="GO:1903465">
    <property type="term" value="P:positive regulation of mitotic cell cycle DNA replication"/>
    <property type="evidence" value="ECO:0000314"/>
    <property type="project" value="MGI"/>
</dbReference>
<dbReference type="GO" id="GO:0045666">
    <property type="term" value="P:positive regulation of neuron differentiation"/>
    <property type="evidence" value="ECO:0000250"/>
    <property type="project" value="UniProtKB"/>
</dbReference>
<dbReference type="GO" id="GO:0010976">
    <property type="term" value="P:positive regulation of neuron projection development"/>
    <property type="evidence" value="ECO:0000316"/>
    <property type="project" value="MGI"/>
</dbReference>
<dbReference type="GO" id="GO:2000830">
    <property type="term" value="P:positive regulation of parathyroid hormone secretion"/>
    <property type="evidence" value="ECO:0000316"/>
    <property type="project" value="MGI"/>
</dbReference>
<dbReference type="GO" id="GO:0051897">
    <property type="term" value="P:positive regulation of phosphatidylinositol 3-kinase/protein kinase B signal transduction"/>
    <property type="evidence" value="ECO:0007669"/>
    <property type="project" value="Ensembl"/>
</dbReference>
<dbReference type="GO" id="GO:2000648">
    <property type="term" value="P:positive regulation of stem cell proliferation"/>
    <property type="evidence" value="ECO:0000315"/>
    <property type="project" value="MGI"/>
</dbReference>
<dbReference type="GO" id="GO:1905564">
    <property type="term" value="P:positive regulation of vascular endothelial cell proliferation"/>
    <property type="evidence" value="ECO:0007669"/>
    <property type="project" value="Ensembl"/>
</dbReference>
<dbReference type="GO" id="GO:0046777">
    <property type="term" value="P:protein autophosphorylation"/>
    <property type="evidence" value="ECO:0000250"/>
    <property type="project" value="UniProtKB"/>
</dbReference>
<dbReference type="GO" id="GO:0060665">
    <property type="term" value="P:regulation of branching involved in salivary gland morphogenesis by mesenchymal-epithelial signaling"/>
    <property type="evidence" value="ECO:0000314"/>
    <property type="project" value="MGI"/>
</dbReference>
<dbReference type="GO" id="GO:0050678">
    <property type="term" value="P:regulation of epithelial cell proliferation"/>
    <property type="evidence" value="ECO:0000315"/>
    <property type="project" value="MGI"/>
</dbReference>
<dbReference type="GO" id="GO:2001239">
    <property type="term" value="P:regulation of extrinsic apoptotic signaling pathway in absence of ligand"/>
    <property type="evidence" value="ECO:0000315"/>
    <property type="project" value="MGI"/>
</dbReference>
<dbReference type="GO" id="GO:0010468">
    <property type="term" value="P:regulation of gene expression"/>
    <property type="evidence" value="ECO:0000315"/>
    <property type="project" value="MGI"/>
</dbReference>
<dbReference type="GO" id="GO:0048378">
    <property type="term" value="P:regulation of lateral mesodermal cell fate specification"/>
    <property type="evidence" value="ECO:0000316"/>
    <property type="project" value="MGI"/>
</dbReference>
<dbReference type="GO" id="GO:0010966">
    <property type="term" value="P:regulation of phosphate transport"/>
    <property type="evidence" value="ECO:0000316"/>
    <property type="project" value="MGI"/>
</dbReference>
<dbReference type="GO" id="GO:0051174">
    <property type="term" value="P:regulation of phosphorus metabolic process"/>
    <property type="evidence" value="ECO:0000316"/>
    <property type="project" value="MGI"/>
</dbReference>
<dbReference type="GO" id="GO:0099151">
    <property type="term" value="P:regulation of postsynaptic density assembly"/>
    <property type="evidence" value="ECO:0000314"/>
    <property type="project" value="SynGO"/>
</dbReference>
<dbReference type="GO" id="GO:1904383">
    <property type="term" value="P:response to sodium phosphate"/>
    <property type="evidence" value="ECO:0000314"/>
    <property type="project" value="MGI"/>
</dbReference>
<dbReference type="GO" id="GO:0007435">
    <property type="term" value="P:salivary gland morphogenesis"/>
    <property type="evidence" value="ECO:0000315"/>
    <property type="project" value="MGI"/>
</dbReference>
<dbReference type="GO" id="GO:0007605">
    <property type="term" value="P:sensory perception of sound"/>
    <property type="evidence" value="ECO:0000315"/>
    <property type="project" value="MGI"/>
</dbReference>
<dbReference type="GO" id="GO:0048863">
    <property type="term" value="P:stem cell differentiation"/>
    <property type="evidence" value="ECO:0000316"/>
    <property type="project" value="MGI"/>
</dbReference>
<dbReference type="GO" id="GO:0072089">
    <property type="term" value="P:stem cell proliferation"/>
    <property type="evidence" value="ECO:0000315"/>
    <property type="project" value="MGI"/>
</dbReference>
<dbReference type="GO" id="GO:0001657">
    <property type="term" value="P:ureteric bud development"/>
    <property type="evidence" value="ECO:0000316"/>
    <property type="project" value="MGI"/>
</dbReference>
<dbReference type="GO" id="GO:0060979">
    <property type="term" value="P:vasculogenesis involved in coronary vascular morphogenesis"/>
    <property type="evidence" value="ECO:0000304"/>
    <property type="project" value="DFLAT"/>
</dbReference>
<dbReference type="GO" id="GO:0021847">
    <property type="term" value="P:ventricular zone neuroblast division"/>
    <property type="evidence" value="ECO:0000315"/>
    <property type="project" value="UniProtKB"/>
</dbReference>
<dbReference type="GO" id="GO:0070640">
    <property type="term" value="P:vitamin D3 metabolic process"/>
    <property type="evidence" value="ECO:0000316"/>
    <property type="project" value="MGI"/>
</dbReference>
<dbReference type="CDD" id="cd04973">
    <property type="entry name" value="IgI_1_FGFR"/>
    <property type="match status" value="1"/>
</dbReference>
<dbReference type="CDD" id="cd05857">
    <property type="entry name" value="IgI_2_FGFR"/>
    <property type="match status" value="1"/>
</dbReference>
<dbReference type="CDD" id="cd05098">
    <property type="entry name" value="PTKc_FGFR1"/>
    <property type="match status" value="1"/>
</dbReference>
<dbReference type="FunFam" id="1.10.510.10:FF:000007">
    <property type="entry name" value="Fibroblast growth factor receptor"/>
    <property type="match status" value="1"/>
</dbReference>
<dbReference type="FunFam" id="2.60.40.10:FF:000016">
    <property type="entry name" value="Fibroblast growth factor receptor"/>
    <property type="match status" value="1"/>
</dbReference>
<dbReference type="FunFam" id="2.60.40.10:FF:000020">
    <property type="entry name" value="Fibroblast growth factor receptor"/>
    <property type="match status" value="1"/>
</dbReference>
<dbReference type="FunFam" id="2.60.40.10:FF:000408">
    <property type="entry name" value="Fibroblast growth factor receptor"/>
    <property type="match status" value="1"/>
</dbReference>
<dbReference type="FunFam" id="3.30.200.20:FF:000011">
    <property type="entry name" value="Fibroblast growth factor receptor"/>
    <property type="match status" value="1"/>
</dbReference>
<dbReference type="Gene3D" id="2.60.40.10">
    <property type="entry name" value="Immunoglobulins"/>
    <property type="match status" value="3"/>
</dbReference>
<dbReference type="Gene3D" id="3.30.200.20">
    <property type="entry name" value="Phosphorylase Kinase, domain 1"/>
    <property type="match status" value="1"/>
</dbReference>
<dbReference type="Gene3D" id="1.10.510.10">
    <property type="entry name" value="Transferase(Phosphotransferase) domain 1"/>
    <property type="match status" value="1"/>
</dbReference>
<dbReference type="InterPro" id="IPR028174">
    <property type="entry name" value="FGF_rcpt_1"/>
</dbReference>
<dbReference type="InterPro" id="IPR016248">
    <property type="entry name" value="FGF_rcpt_fam"/>
</dbReference>
<dbReference type="InterPro" id="IPR007110">
    <property type="entry name" value="Ig-like_dom"/>
</dbReference>
<dbReference type="InterPro" id="IPR036179">
    <property type="entry name" value="Ig-like_dom_sf"/>
</dbReference>
<dbReference type="InterPro" id="IPR013783">
    <property type="entry name" value="Ig-like_fold"/>
</dbReference>
<dbReference type="InterPro" id="IPR013098">
    <property type="entry name" value="Ig_I-set"/>
</dbReference>
<dbReference type="InterPro" id="IPR003599">
    <property type="entry name" value="Ig_sub"/>
</dbReference>
<dbReference type="InterPro" id="IPR003598">
    <property type="entry name" value="Ig_sub2"/>
</dbReference>
<dbReference type="InterPro" id="IPR013151">
    <property type="entry name" value="Immunoglobulin_dom"/>
</dbReference>
<dbReference type="InterPro" id="IPR011009">
    <property type="entry name" value="Kinase-like_dom_sf"/>
</dbReference>
<dbReference type="InterPro" id="IPR000719">
    <property type="entry name" value="Prot_kinase_dom"/>
</dbReference>
<dbReference type="InterPro" id="IPR017441">
    <property type="entry name" value="Protein_kinase_ATP_BS"/>
</dbReference>
<dbReference type="InterPro" id="IPR050122">
    <property type="entry name" value="RTK"/>
</dbReference>
<dbReference type="InterPro" id="IPR001245">
    <property type="entry name" value="Ser-Thr/Tyr_kinase_cat_dom"/>
</dbReference>
<dbReference type="InterPro" id="IPR008266">
    <property type="entry name" value="Tyr_kinase_AS"/>
</dbReference>
<dbReference type="InterPro" id="IPR020635">
    <property type="entry name" value="Tyr_kinase_cat_dom"/>
</dbReference>
<dbReference type="PANTHER" id="PTHR24416:SF131">
    <property type="entry name" value="FIBROBLAST GROWTH FACTOR RECEPTOR 1"/>
    <property type="match status" value="1"/>
</dbReference>
<dbReference type="PANTHER" id="PTHR24416">
    <property type="entry name" value="TYROSINE-PROTEIN KINASE RECEPTOR"/>
    <property type="match status" value="1"/>
</dbReference>
<dbReference type="Pfam" id="PF07679">
    <property type="entry name" value="I-set"/>
    <property type="match status" value="2"/>
</dbReference>
<dbReference type="Pfam" id="PF00047">
    <property type="entry name" value="ig"/>
    <property type="match status" value="1"/>
</dbReference>
<dbReference type="Pfam" id="PF07714">
    <property type="entry name" value="PK_Tyr_Ser-Thr"/>
    <property type="match status" value="1"/>
</dbReference>
<dbReference type="PIRSF" id="PIRSF000628">
    <property type="entry name" value="FGFR"/>
    <property type="match status" value="1"/>
</dbReference>
<dbReference type="PRINTS" id="PR00109">
    <property type="entry name" value="TYRKINASE"/>
</dbReference>
<dbReference type="SMART" id="SM00409">
    <property type="entry name" value="IG"/>
    <property type="match status" value="3"/>
</dbReference>
<dbReference type="SMART" id="SM00408">
    <property type="entry name" value="IGc2"/>
    <property type="match status" value="3"/>
</dbReference>
<dbReference type="SMART" id="SM00219">
    <property type="entry name" value="TyrKc"/>
    <property type="match status" value="1"/>
</dbReference>
<dbReference type="SUPFAM" id="SSF48726">
    <property type="entry name" value="Immunoglobulin"/>
    <property type="match status" value="3"/>
</dbReference>
<dbReference type="SUPFAM" id="SSF56112">
    <property type="entry name" value="Protein kinase-like (PK-like)"/>
    <property type="match status" value="1"/>
</dbReference>
<dbReference type="PROSITE" id="PS50835">
    <property type="entry name" value="IG_LIKE"/>
    <property type="match status" value="3"/>
</dbReference>
<dbReference type="PROSITE" id="PS00107">
    <property type="entry name" value="PROTEIN_KINASE_ATP"/>
    <property type="match status" value="1"/>
</dbReference>
<dbReference type="PROSITE" id="PS50011">
    <property type="entry name" value="PROTEIN_KINASE_DOM"/>
    <property type="match status" value="1"/>
</dbReference>
<dbReference type="PROSITE" id="PS00109">
    <property type="entry name" value="PROTEIN_KINASE_TYR"/>
    <property type="match status" value="1"/>
</dbReference>
<organism>
    <name type="scientific">Mus musculus</name>
    <name type="common">Mouse</name>
    <dbReference type="NCBI Taxonomy" id="10090"/>
    <lineage>
        <taxon>Eukaryota</taxon>
        <taxon>Metazoa</taxon>
        <taxon>Chordata</taxon>
        <taxon>Craniata</taxon>
        <taxon>Vertebrata</taxon>
        <taxon>Euteleostomi</taxon>
        <taxon>Mammalia</taxon>
        <taxon>Eutheria</taxon>
        <taxon>Euarchontoglires</taxon>
        <taxon>Glires</taxon>
        <taxon>Rodentia</taxon>
        <taxon>Myomorpha</taxon>
        <taxon>Muroidea</taxon>
        <taxon>Muridae</taxon>
        <taxon>Murinae</taxon>
        <taxon>Mus</taxon>
        <taxon>Mus</taxon>
    </lineage>
</organism>
<feature type="signal peptide" evidence="3">
    <location>
        <begin position="1"/>
        <end position="21"/>
    </location>
</feature>
<feature type="chain" id="PRO_0000016781" description="Fibroblast growth factor receptor 1">
    <location>
        <begin position="22"/>
        <end position="822"/>
    </location>
</feature>
<feature type="topological domain" description="Extracellular" evidence="3">
    <location>
        <begin position="22"/>
        <end position="376"/>
    </location>
</feature>
<feature type="transmembrane region" description="Helical" evidence="3">
    <location>
        <begin position="377"/>
        <end position="397"/>
    </location>
</feature>
<feature type="topological domain" description="Cytoplasmic" evidence="3">
    <location>
        <begin position="398"/>
        <end position="822"/>
    </location>
</feature>
<feature type="domain" description="Ig-like C2-type 1">
    <location>
        <begin position="25"/>
        <end position="119"/>
    </location>
</feature>
<feature type="domain" description="Ig-like C2-type 2">
    <location>
        <begin position="158"/>
        <end position="246"/>
    </location>
</feature>
<feature type="domain" description="Ig-like C2-type 3">
    <location>
        <begin position="255"/>
        <end position="357"/>
    </location>
</feature>
<feature type="domain" description="Protein kinase" evidence="5">
    <location>
        <begin position="478"/>
        <end position="767"/>
    </location>
</feature>
<feature type="region of interest" description="Disordered" evidence="7">
    <location>
        <begin position="120"/>
        <end position="162"/>
    </location>
</feature>
<feature type="region of interest" description="Heparin-binding">
    <location>
        <begin position="160"/>
        <end position="177"/>
    </location>
</feature>
<feature type="region of interest" description="Disordered" evidence="7">
    <location>
        <begin position="782"/>
        <end position="822"/>
    </location>
</feature>
<feature type="compositionally biased region" description="Acidic residues" evidence="7">
    <location>
        <begin position="125"/>
        <end position="135"/>
    </location>
</feature>
<feature type="compositionally biased region" description="Basic and acidic residues" evidence="7">
    <location>
        <begin position="136"/>
        <end position="145"/>
    </location>
</feature>
<feature type="compositionally biased region" description="Polar residues" evidence="7">
    <location>
        <begin position="782"/>
        <end position="792"/>
    </location>
</feature>
<feature type="active site" description="Proton acceptor" evidence="5 6">
    <location>
        <position position="623"/>
    </location>
</feature>
<feature type="binding site" evidence="5">
    <location>
        <begin position="484"/>
        <end position="490"/>
    </location>
    <ligand>
        <name>ATP</name>
        <dbReference type="ChEBI" id="CHEBI:30616"/>
    </ligand>
</feature>
<feature type="binding site" evidence="5">
    <location>
        <position position="514"/>
    </location>
    <ligand>
        <name>ATP</name>
        <dbReference type="ChEBI" id="CHEBI:30616"/>
    </ligand>
</feature>
<feature type="binding site" evidence="5">
    <location>
        <begin position="562"/>
        <end position="564"/>
    </location>
    <ligand>
        <name>ATP</name>
        <dbReference type="ChEBI" id="CHEBI:30616"/>
    </ligand>
</feature>
<feature type="binding site" evidence="5">
    <location>
        <position position="568"/>
    </location>
    <ligand>
        <name>ATP</name>
        <dbReference type="ChEBI" id="CHEBI:30616"/>
    </ligand>
</feature>
<feature type="binding site" evidence="5">
    <location>
        <position position="627"/>
    </location>
    <ligand>
        <name>ATP</name>
        <dbReference type="ChEBI" id="CHEBI:30616"/>
    </ligand>
</feature>
<feature type="binding site" evidence="5">
    <location>
        <position position="641"/>
    </location>
    <ligand>
        <name>ATP</name>
        <dbReference type="ChEBI" id="CHEBI:30616"/>
    </ligand>
</feature>
<feature type="site" description="Mediates interaction with PLCG1 and SHB" evidence="1">
    <location>
        <position position="766"/>
    </location>
</feature>
<feature type="modified residue" description="Phosphotyrosine; by autocatalysis" evidence="2">
    <location>
        <position position="463"/>
    </location>
</feature>
<feature type="modified residue" description="Phosphotyrosine; by autocatalysis" evidence="2">
    <location>
        <position position="583"/>
    </location>
</feature>
<feature type="modified residue" description="Phosphotyrosine; by autocatalysis" evidence="2">
    <location>
        <position position="585"/>
    </location>
</feature>
<feature type="modified residue" description="Phosphotyrosine; by autocatalysis" evidence="2">
    <location>
        <position position="653"/>
    </location>
</feature>
<feature type="modified residue" description="Phosphotyrosine; by autocatalysis" evidence="2">
    <location>
        <position position="654"/>
    </location>
</feature>
<feature type="modified residue" description="Phosphotyrosine; by autocatalysis" evidence="2">
    <location>
        <position position="730"/>
    </location>
</feature>
<feature type="modified residue" description="Phosphotyrosine; by autocatalysis" evidence="2">
    <location>
        <position position="766"/>
    </location>
</feature>
<feature type="glycosylation site" description="N-linked (GlcNAc...) asparagine" evidence="3">
    <location>
        <position position="77"/>
    </location>
</feature>
<feature type="glycosylation site" description="N-linked (GlcNAc...) asparagine" evidence="3">
    <location>
        <position position="117"/>
    </location>
</feature>
<feature type="glycosylation site" description="N-linked (GlcNAc...) asparagine" evidence="3">
    <location>
        <position position="227"/>
    </location>
</feature>
<feature type="glycosylation site" description="N-linked (GlcNAc...) asparagine" evidence="3">
    <location>
        <position position="240"/>
    </location>
</feature>
<feature type="glycosylation site" description="N-linked (GlcNAc...) asparagine" evidence="3">
    <location>
        <position position="264"/>
    </location>
</feature>
<feature type="glycosylation site" description="N-linked (GlcNAc...) asparagine" evidence="3">
    <location>
        <position position="296"/>
    </location>
</feature>
<feature type="glycosylation site" description="N-linked (GlcNAc...) asparagine" evidence="16">
    <location>
        <position position="317"/>
    </location>
</feature>
<feature type="glycosylation site" description="N-linked (GlcNAc...) asparagine" evidence="3">
    <location>
        <position position="330"/>
    </location>
</feature>
<feature type="disulfide bond" evidence="4">
    <location>
        <begin position="55"/>
        <end position="101"/>
    </location>
</feature>
<feature type="disulfide bond" evidence="4">
    <location>
        <begin position="178"/>
        <end position="230"/>
    </location>
</feature>
<feature type="disulfide bond" evidence="4">
    <location>
        <begin position="277"/>
        <end position="341"/>
    </location>
</feature>
<feature type="splice variant" id="VSP_002961" description="In isoform 3." evidence="23">
    <original>Q</original>
    <variation>QGSSSWPLWVAAA</variation>
    <location>
        <position position="30"/>
    </location>
</feature>
<feature type="splice variant" id="VSP_002962" description="In isoform 2, isoform 4 and isoform 5." evidence="20 21 22 25 26">
    <location>
        <begin position="31"/>
        <end position="119"/>
    </location>
</feature>
<feature type="splice variant" id="VSP_002963" description="In isoform 3, isoform 4, isoform 5 and isoform 6." evidence="20 21 23 24">
    <location>
        <begin position="148"/>
        <end position="149"/>
    </location>
</feature>
<feature type="splice variant" id="VSP_041919" description="In isoform 5." evidence="20">
    <original>TAGVNTTDKEM</original>
    <variation>HSGINSSDA</variation>
    <location>
        <begin position="313"/>
        <end position="323"/>
    </location>
</feature>
<feature type="splice variant" id="VSP_041920" description="In isoform 5." evidence="20">
    <original>HLRNVSFEDA</original>
    <variation>TLFNVTEAQS</variation>
    <location>
        <begin position="327"/>
        <end position="336"/>
    </location>
</feature>
<feature type="splice variant" id="VSP_041921" description="In isoform 5." evidence="20">
    <original>TCLAGNSIGLSHH</original>
    <variation>VCKVSNYIGEANQ</variation>
    <location>
        <begin position="340"/>
        <end position="352"/>
    </location>
</feature>
<feature type="splice variant" id="VSP_041922" description="In isoform 5." evidence="20">
    <original>LE</original>
    <variation>TRPVAK</variation>
    <location>
        <begin position="359"/>
        <end position="360"/>
    </location>
</feature>
<feature type="sequence conflict" description="In Ref. 4; AAA37622." evidence="27" ref="4">
    <original>T</original>
    <variation>S</variation>
    <location>
        <position position="229"/>
    </location>
</feature>
<feature type="sequence conflict" description="In Ref. 1; AAA37290 and 3; AAA37620." evidence="27" ref="1 3">
    <original>ILQ</original>
    <variation>HPS</variation>
    <location>
        <begin position="256"/>
        <end position="258"/>
    </location>
</feature>
<feature type="sequence conflict" description="In Ref. 5; AAC52183." evidence="27" ref="5">
    <original>K</original>
    <variation>E</variation>
    <location>
        <position position="265"/>
    </location>
</feature>
<feature type="sequence conflict" description="In Ref. 4; AAA37622." evidence="27" ref="4">
    <original>G</original>
    <variation>A</variation>
    <location>
        <position position="270"/>
    </location>
</feature>
<feature type="sequence conflict" description="In Ref. 3; AAA37620." evidence="27" ref="3">
    <original>I</original>
    <variation>M</variation>
    <location>
        <position position="387"/>
    </location>
</feature>
<feature type="sequence conflict" description="In Ref. 2; CAA36175." evidence="27" ref="2">
    <original>G</original>
    <variation>A</variation>
    <location>
        <position position="440"/>
    </location>
</feature>
<feature type="sequence conflict" description="In Ref. 5; AAC52183." evidence="27" ref="5">
    <original>L</original>
    <variation>P</variation>
    <location>
        <position position="457"/>
    </location>
</feature>
<feature type="sequence conflict" description="In Ref. 3; AAA37620." evidence="27" ref="3">
    <original>V</original>
    <variation>L</variation>
    <location>
        <position position="508"/>
    </location>
</feature>
<feature type="sequence conflict" description="In Ref. 4; AAA37622." evidence="27" ref="4">
    <original>I</original>
    <variation>M</variation>
    <location>
        <position position="544"/>
    </location>
</feature>
<feature type="sequence conflict" description="In Ref. 6; AAF05312." evidence="27" ref="6">
    <original>G</original>
    <variation>E</variation>
    <location>
        <position position="549"/>
    </location>
</feature>
<feature type="sequence conflict" description="In Ref. 6; AAF05312." evidence="27" ref="6">
    <original>D</original>
    <variation>V</variation>
    <location>
        <position position="753"/>
    </location>
</feature>
<feature type="sequence conflict" description="In Ref. 1; AAA37290." evidence="27" ref="1">
    <original>R</original>
    <variation>H</variation>
    <location>
        <position position="756"/>
    </location>
</feature>
<feature type="sequence conflict" description="In Ref. 5; AAC52183." evidence="27" ref="5">
    <original>N</original>
    <variation>S</variation>
    <location>
        <position position="763"/>
    </location>
</feature>
<feature type="sequence conflict" description="In Ref. 4; AAA37622." evidence="27" ref="4">
    <original>E</original>
    <variation>D</variation>
    <location>
        <position position="765"/>
    </location>
</feature>
<feature type="strand" evidence="28">
    <location>
        <begin position="43"/>
        <end position="45"/>
    </location>
</feature>
<feature type="strand" evidence="28">
    <location>
        <begin position="51"/>
        <end position="54"/>
    </location>
</feature>
<feature type="strand" evidence="28">
    <location>
        <begin position="57"/>
        <end position="60"/>
    </location>
</feature>
<feature type="strand" evidence="28">
    <location>
        <begin position="63"/>
        <end position="68"/>
    </location>
</feature>
<feature type="strand" evidence="28">
    <location>
        <begin position="77"/>
        <end position="81"/>
    </location>
</feature>
<feature type="strand" evidence="28">
    <location>
        <begin position="83"/>
        <end position="90"/>
    </location>
</feature>
<feature type="helix" evidence="28">
    <location>
        <begin position="93"/>
        <end position="95"/>
    </location>
</feature>
<feature type="strand" evidence="28">
    <location>
        <begin position="96"/>
        <end position="105"/>
    </location>
</feature>
<feature type="strand" evidence="28">
    <location>
        <begin position="108"/>
        <end position="118"/>
    </location>
</feature>
<protein>
    <recommendedName>
        <fullName>Fibroblast growth factor receptor 1</fullName>
        <shortName>FGFR-1</shortName>
        <shortName>bFGF-R-1</shortName>
        <ecNumber evidence="2">2.7.10.1</ecNumber>
    </recommendedName>
    <alternativeName>
        <fullName>Basic fibroblast growth factor receptor 1</fullName>
    </alternativeName>
    <alternativeName>
        <fullName>MFR</fullName>
    </alternativeName>
    <alternativeName>
        <fullName>Proto-oncogene c-Fgr</fullName>
    </alternativeName>
    <cdAntigenName>CD331</cdAntigenName>
</protein>
<accession>P16092</accession>
<accession>E9Q2P4</accession>
<accession>Q01736</accession>
<accession>Q60830</accession>
<accession>Q61562</accession>
<accession>Q80T10</accession>
<accession>Q8CFK8</accession>
<accession>Q9QZM7</accession>
<keyword id="KW-0002">3D-structure</keyword>
<keyword id="KW-0025">Alternative splicing</keyword>
<keyword id="KW-0067">ATP-binding</keyword>
<keyword id="KW-1003">Cell membrane</keyword>
<keyword id="KW-0963">Cytoplasm</keyword>
<keyword id="KW-0968">Cytoplasmic vesicle</keyword>
<keyword id="KW-1015">Disulfide bond</keyword>
<keyword id="KW-0325">Glycoprotein</keyword>
<keyword id="KW-0358">Heparin-binding</keyword>
<keyword id="KW-0393">Immunoglobulin domain</keyword>
<keyword id="KW-0418">Kinase</keyword>
<keyword id="KW-0472">Membrane</keyword>
<keyword id="KW-0547">Nucleotide-binding</keyword>
<keyword id="KW-0539">Nucleus</keyword>
<keyword id="KW-0597">Phosphoprotein</keyword>
<keyword id="KW-0675">Receptor</keyword>
<keyword id="KW-1185">Reference proteome</keyword>
<keyword id="KW-0677">Repeat</keyword>
<keyword id="KW-0732">Signal</keyword>
<keyword id="KW-0808">Transferase</keyword>
<keyword id="KW-0812">Transmembrane</keyword>
<keyword id="KW-1133">Transmembrane helix</keyword>
<keyword id="KW-0829">Tyrosine-protein kinase</keyword>
<keyword id="KW-0832">Ubl conjugation</keyword>
<proteinExistence type="evidence at protein level"/>
<sequence>MWGWKCLLFWAVLVTATLCTARPAPTLPEQAQPWGVPVEVESLLVHPGDLLQLRCRLRDDVQSINWLRDGVQLVESNRTRITGEEVEVRDSIPADSGLYACVTSSPSGSDTTYFSVNVSDALPSSEDDDDDDDSSSEEKETDNTKPNRRPVAPYWTSPEKMEKKLHAVPAAKTVKFKCPSSGTPNPTLRWLKNGKEFKPDHRIGGYKVRYATWSIIMDSVVPSDKGNYTCIVENEYGSINHTYQLDVVERSPHRPILQAGLPANKTVALGSNVEFMCKVYSDPQPHIQWLKHIEVNGSKIGPDNLPYVQILKTAGVNTTDKEMEVLHLRNVSFEDAGEYTCLAGNSIGLSHHSAWLTVLEALEERPAVMTSPLYLEIIIYCTGAFLISCMLGSVIIYKMKSGTKKSDFHSQMAVHKLAKSIPLRRQVTVSADSSASMNSGVLLVRPSRLSSSGTPMLAGVSEYELPEDPRWELPRDRLVLGKPLGEGCFGQVVLAEAIGLDKDKPNRVTKVAVKMLKSDATEKDLSDLISEMEMMKMIGKHKNIINLLGACTQDGPLYVIVEYASKGNLREYLQARRPPGLEYCYNPSHNPEEQLSSKDLVSCAYQVARGMEYLASKKCIHRDLAARNVLVTEDNVMKIADFGLARDIHHIDYYKKTTNGRLPVKWMAPEALFDRIYTHQSDVWSFGVLLWEIFTLGGSPYPGVPVEELFKLLKEGHRMDKPSNCTNELYMMMRDCWHAVPSQRPTFKQLVEDLDRIVALTSNQEYLDLSIPLDQYSPSFPDTRSSTCSSGEDSVFSHEPLPEEPCLPRHPTQLANSGLKRR</sequence>